<accession>Q4A7S3</accession>
<comment type="function">
    <text evidence="1">Necessary for normal cell division and for the maintenance of normal septation.</text>
</comment>
<comment type="cofactor">
    <cofactor evidence="1">
        <name>Mg(2+)</name>
        <dbReference type="ChEBI" id="CHEBI:18420"/>
    </cofactor>
</comment>
<comment type="similarity">
    <text evidence="1">Belongs to the TRAFAC class TrmE-Era-EngA-EngB-Septin-like GTPase superfamily. EngB GTPase family.</text>
</comment>
<reference key="1">
    <citation type="journal article" date="2005" name="J. Bacteriol.">
        <title>Swine and poultry pathogens: the complete genome sequences of two strains of Mycoplasma hyopneumoniae and a strain of Mycoplasma synoviae.</title>
        <authorList>
            <person name="Vasconcelos A.T.R."/>
            <person name="Ferreira H.B."/>
            <person name="Bizarro C.V."/>
            <person name="Bonatto S.L."/>
            <person name="Carvalho M.O."/>
            <person name="Pinto P.M."/>
            <person name="Almeida D.F."/>
            <person name="Almeida L.G.P."/>
            <person name="Almeida R."/>
            <person name="Alves-Junior L."/>
            <person name="Assuncao E.N."/>
            <person name="Azevedo V.A.C."/>
            <person name="Bogo M.R."/>
            <person name="Brigido M.M."/>
            <person name="Brocchi M."/>
            <person name="Burity H.A."/>
            <person name="Camargo A.A."/>
            <person name="Camargo S.S."/>
            <person name="Carepo M.S."/>
            <person name="Carraro D.M."/>
            <person name="de Mattos Cascardo J.C."/>
            <person name="Castro L.A."/>
            <person name="Cavalcanti G."/>
            <person name="Chemale G."/>
            <person name="Collevatti R.G."/>
            <person name="Cunha C.W."/>
            <person name="Dallagiovanna B."/>
            <person name="Dambros B.P."/>
            <person name="Dellagostin O.A."/>
            <person name="Falcao C."/>
            <person name="Fantinatti-Garboggini F."/>
            <person name="Felipe M.S.S."/>
            <person name="Fiorentin L."/>
            <person name="Franco G.R."/>
            <person name="Freitas N.S.A."/>
            <person name="Frias D."/>
            <person name="Grangeiro T.B."/>
            <person name="Grisard E.C."/>
            <person name="Guimaraes C.T."/>
            <person name="Hungria M."/>
            <person name="Jardim S.N."/>
            <person name="Krieger M.A."/>
            <person name="Laurino J.P."/>
            <person name="Lima L.F.A."/>
            <person name="Lopes M.I."/>
            <person name="Loreto E.L.S."/>
            <person name="Madeira H.M.F."/>
            <person name="Manfio G.P."/>
            <person name="Maranhao A.Q."/>
            <person name="Martinkovics C.T."/>
            <person name="Medeiros S.R.B."/>
            <person name="Moreira M.A.M."/>
            <person name="Neiva M."/>
            <person name="Ramalho-Neto C.E."/>
            <person name="Nicolas M.F."/>
            <person name="Oliveira S.C."/>
            <person name="Paixao R.F.C."/>
            <person name="Pedrosa F.O."/>
            <person name="Pena S.D.J."/>
            <person name="Pereira M."/>
            <person name="Pereira-Ferrari L."/>
            <person name="Piffer I."/>
            <person name="Pinto L.S."/>
            <person name="Potrich D.P."/>
            <person name="Salim A.C.M."/>
            <person name="Santos F.R."/>
            <person name="Schmitt R."/>
            <person name="Schneider M.P.C."/>
            <person name="Schrank A."/>
            <person name="Schrank I.S."/>
            <person name="Schuck A.F."/>
            <person name="Seuanez H.N."/>
            <person name="Silva D.W."/>
            <person name="Silva R."/>
            <person name="Silva S.C."/>
            <person name="Soares C.M.A."/>
            <person name="Souza K.R.L."/>
            <person name="Souza R.C."/>
            <person name="Staats C.C."/>
            <person name="Steffens M.B.R."/>
            <person name="Teixeira S.M.R."/>
            <person name="Urmenyi T.P."/>
            <person name="Vainstein M.H."/>
            <person name="Zuccherato L.W."/>
            <person name="Simpson A.J.G."/>
            <person name="Zaha A."/>
        </authorList>
    </citation>
    <scope>NUCLEOTIDE SEQUENCE [LARGE SCALE GENOMIC DNA]</scope>
    <source>
        <strain>7448</strain>
    </source>
</reference>
<organism>
    <name type="scientific">Mesomycoplasma hyopneumoniae (strain 7448)</name>
    <name type="common">Mycoplasma hyopneumoniae</name>
    <dbReference type="NCBI Taxonomy" id="262722"/>
    <lineage>
        <taxon>Bacteria</taxon>
        <taxon>Bacillati</taxon>
        <taxon>Mycoplasmatota</taxon>
        <taxon>Mycoplasmoidales</taxon>
        <taxon>Metamycoplasmataceae</taxon>
        <taxon>Mesomycoplasma</taxon>
    </lineage>
</organism>
<name>ENGB_MESH7</name>
<sequence>MVKCKLFFWLISWFLKVKNVEKVWKFLKSCPENCYSDPQFAFIGRSNVGKSTLINALANKKIAKTSTKPGRTQLLNFYKNESEKLFVDLPGYGYAAVSKTKKHQIDRIIAGYFQKDQPISAVFLILDARVGFTNLDYIMIEYIIQQGFKLHILANKIDKTNQSTRAILLNQCKKLKLNCLLISAKNKNNLSKLQELLE</sequence>
<feature type="chain" id="PRO_0000266896" description="Probable GTP-binding protein EngB">
    <location>
        <begin position="1"/>
        <end position="198"/>
    </location>
</feature>
<feature type="domain" description="EngB-type G" evidence="1">
    <location>
        <begin position="36"/>
        <end position="198"/>
    </location>
</feature>
<feature type="binding site" evidence="1">
    <location>
        <begin position="44"/>
        <end position="51"/>
    </location>
    <ligand>
        <name>GTP</name>
        <dbReference type="ChEBI" id="CHEBI:37565"/>
    </ligand>
</feature>
<feature type="binding site" evidence="1">
    <location>
        <position position="51"/>
    </location>
    <ligand>
        <name>Mg(2+)</name>
        <dbReference type="ChEBI" id="CHEBI:18420"/>
    </ligand>
</feature>
<feature type="binding site" evidence="1">
    <location>
        <begin position="70"/>
        <end position="74"/>
    </location>
    <ligand>
        <name>GTP</name>
        <dbReference type="ChEBI" id="CHEBI:37565"/>
    </ligand>
</feature>
<feature type="binding site" evidence="1">
    <location>
        <position position="72"/>
    </location>
    <ligand>
        <name>Mg(2+)</name>
        <dbReference type="ChEBI" id="CHEBI:18420"/>
    </ligand>
</feature>
<feature type="binding site" evidence="1">
    <location>
        <begin position="88"/>
        <end position="91"/>
    </location>
    <ligand>
        <name>GTP</name>
        <dbReference type="ChEBI" id="CHEBI:37565"/>
    </ligand>
</feature>
<feature type="binding site" evidence="1">
    <location>
        <begin position="155"/>
        <end position="158"/>
    </location>
    <ligand>
        <name>GTP</name>
        <dbReference type="ChEBI" id="CHEBI:37565"/>
    </ligand>
</feature>
<feature type="binding site" evidence="1">
    <location>
        <begin position="182"/>
        <end position="184"/>
    </location>
    <ligand>
        <name>GTP</name>
        <dbReference type="ChEBI" id="CHEBI:37565"/>
    </ligand>
</feature>
<gene>
    <name evidence="1" type="primary">engB</name>
    <name type="ordered locus">MHP7448_0449</name>
</gene>
<protein>
    <recommendedName>
        <fullName evidence="1">Probable GTP-binding protein EngB</fullName>
    </recommendedName>
</protein>
<dbReference type="EMBL" id="AE017244">
    <property type="protein sequence ID" value="AAZ53816.2"/>
    <property type="molecule type" value="Genomic_DNA"/>
</dbReference>
<dbReference type="RefSeq" id="WP_044272526.1">
    <property type="nucleotide sequence ID" value="NC_007332.1"/>
</dbReference>
<dbReference type="SMR" id="Q4A7S3"/>
<dbReference type="KEGG" id="mhp:MHP7448_0449"/>
<dbReference type="HOGENOM" id="CLU_033732_3_2_14"/>
<dbReference type="Proteomes" id="UP000000553">
    <property type="component" value="Chromosome"/>
</dbReference>
<dbReference type="GO" id="GO:0005829">
    <property type="term" value="C:cytosol"/>
    <property type="evidence" value="ECO:0007669"/>
    <property type="project" value="TreeGrafter"/>
</dbReference>
<dbReference type="GO" id="GO:0005525">
    <property type="term" value="F:GTP binding"/>
    <property type="evidence" value="ECO:0007669"/>
    <property type="project" value="UniProtKB-UniRule"/>
</dbReference>
<dbReference type="GO" id="GO:0046872">
    <property type="term" value="F:metal ion binding"/>
    <property type="evidence" value="ECO:0007669"/>
    <property type="project" value="UniProtKB-KW"/>
</dbReference>
<dbReference type="GO" id="GO:0000917">
    <property type="term" value="P:division septum assembly"/>
    <property type="evidence" value="ECO:0007669"/>
    <property type="project" value="UniProtKB-KW"/>
</dbReference>
<dbReference type="CDD" id="cd01876">
    <property type="entry name" value="YihA_EngB"/>
    <property type="match status" value="1"/>
</dbReference>
<dbReference type="Gene3D" id="3.40.50.300">
    <property type="entry name" value="P-loop containing nucleotide triphosphate hydrolases"/>
    <property type="match status" value="1"/>
</dbReference>
<dbReference type="HAMAP" id="MF_00321">
    <property type="entry name" value="GTPase_EngB"/>
    <property type="match status" value="1"/>
</dbReference>
<dbReference type="InterPro" id="IPR030393">
    <property type="entry name" value="G_ENGB_dom"/>
</dbReference>
<dbReference type="InterPro" id="IPR006073">
    <property type="entry name" value="GTP-bd"/>
</dbReference>
<dbReference type="InterPro" id="IPR019987">
    <property type="entry name" value="GTP-bd_ribosome_bio_YsxC"/>
</dbReference>
<dbReference type="InterPro" id="IPR027417">
    <property type="entry name" value="P-loop_NTPase"/>
</dbReference>
<dbReference type="InterPro" id="IPR005225">
    <property type="entry name" value="Small_GTP-bd"/>
</dbReference>
<dbReference type="NCBIfam" id="TIGR03598">
    <property type="entry name" value="GTPase_YsxC"/>
    <property type="match status" value="1"/>
</dbReference>
<dbReference type="NCBIfam" id="TIGR00231">
    <property type="entry name" value="small_GTP"/>
    <property type="match status" value="1"/>
</dbReference>
<dbReference type="PANTHER" id="PTHR11649:SF13">
    <property type="entry name" value="ENGB-TYPE G DOMAIN-CONTAINING PROTEIN"/>
    <property type="match status" value="1"/>
</dbReference>
<dbReference type="PANTHER" id="PTHR11649">
    <property type="entry name" value="MSS1/TRME-RELATED GTP-BINDING PROTEIN"/>
    <property type="match status" value="1"/>
</dbReference>
<dbReference type="Pfam" id="PF01926">
    <property type="entry name" value="MMR_HSR1"/>
    <property type="match status" value="1"/>
</dbReference>
<dbReference type="SUPFAM" id="SSF52540">
    <property type="entry name" value="P-loop containing nucleoside triphosphate hydrolases"/>
    <property type="match status" value="1"/>
</dbReference>
<dbReference type="PROSITE" id="PS51706">
    <property type="entry name" value="G_ENGB"/>
    <property type="match status" value="1"/>
</dbReference>
<evidence type="ECO:0000255" key="1">
    <source>
        <dbReference type="HAMAP-Rule" id="MF_00321"/>
    </source>
</evidence>
<proteinExistence type="inferred from homology"/>
<keyword id="KW-0131">Cell cycle</keyword>
<keyword id="KW-0132">Cell division</keyword>
<keyword id="KW-0342">GTP-binding</keyword>
<keyword id="KW-0460">Magnesium</keyword>
<keyword id="KW-0479">Metal-binding</keyword>
<keyword id="KW-0547">Nucleotide-binding</keyword>
<keyword id="KW-0717">Septation</keyword>